<proteinExistence type="evidence at protein level"/>
<comment type="function">
    <text evidence="7 8 9 10">S-adenosyl-L-methionine-dependent methyltransferase that catalyzes the formation of 5-methyl-uridine in tRNAs and some mRNAs (PubMed:31361898, PubMed:33799331, PubMed:34556860). Mainly catalyzes the methylation of uridine at position 54 (m5U54) in cytosolic tRNAs (PubMed:31361898, PubMed:33799331). Also able to mediate the formation of 5-methyl-uridine in some mRNAs (PubMed:34123281).</text>
</comment>
<comment type="catalytic activity">
    <reaction evidence="8">
        <text>uridine(54) in tRNA + S-adenosyl-L-methionine = 5-methyluridine(54) in tRNA + S-adenosyl-L-homocysteine + H(+)</text>
        <dbReference type="Rhea" id="RHEA:42712"/>
        <dbReference type="Rhea" id="RHEA-COMP:10167"/>
        <dbReference type="Rhea" id="RHEA-COMP:10193"/>
        <dbReference type="ChEBI" id="CHEBI:15378"/>
        <dbReference type="ChEBI" id="CHEBI:57856"/>
        <dbReference type="ChEBI" id="CHEBI:59789"/>
        <dbReference type="ChEBI" id="CHEBI:65315"/>
        <dbReference type="ChEBI" id="CHEBI:74447"/>
        <dbReference type="EC" id="2.1.1.35"/>
    </reaction>
    <physiologicalReaction direction="left-to-right" evidence="8">
        <dbReference type="Rhea" id="RHEA:42713"/>
    </physiologicalReaction>
</comment>
<comment type="catalytic activity">
    <reaction evidence="9">
        <text>a uridine in mRNA + S-adenosyl-L-methionine = a 5-methyluridine in mRNA + S-adenosyl-L-homocysteine + H(+)</text>
        <dbReference type="Rhea" id="RHEA:69863"/>
        <dbReference type="Rhea" id="RHEA-COMP:14658"/>
        <dbReference type="Rhea" id="RHEA-COMP:17793"/>
        <dbReference type="ChEBI" id="CHEBI:15378"/>
        <dbReference type="ChEBI" id="CHEBI:57856"/>
        <dbReference type="ChEBI" id="CHEBI:59789"/>
        <dbReference type="ChEBI" id="CHEBI:65315"/>
        <dbReference type="ChEBI" id="CHEBI:74447"/>
    </reaction>
    <physiologicalReaction direction="left-to-right" evidence="9">
        <dbReference type="Rhea" id="RHEA:69864"/>
    </physiologicalReaction>
</comment>
<comment type="interaction">
    <interactant intactId="EBI-2515774">
        <id>Q8IZ69</id>
    </interactant>
    <interactant intactId="EBI-743771">
        <id>Q92624</id>
        <label>APPBP2</label>
    </interactant>
    <organismsDiffer>false</organismsDiffer>
    <experiments>3</experiments>
</comment>
<comment type="interaction">
    <interactant intactId="EBI-2515774">
        <id>Q8IZ69</id>
    </interactant>
    <interactant intactId="EBI-307531">
        <id>P23508</id>
        <label>MCC</label>
    </interactant>
    <organismsDiffer>false</organismsDiffer>
    <experiments>3</experiments>
</comment>
<comment type="interaction">
    <interactant intactId="EBI-2515774">
        <id>Q8IZ69</id>
    </interactant>
    <interactant intactId="EBI-16439278">
        <id>Q6FHY5</id>
        <label>MEOX2</label>
    </interactant>
    <organismsDiffer>false</organismsDiffer>
    <experiments>3</experiments>
</comment>
<comment type="interaction">
    <interactant intactId="EBI-2515774">
        <id>Q8IZ69</id>
    </interactant>
    <interactant intactId="EBI-6165891">
        <id>Q14696</id>
        <label>MESD</label>
    </interactant>
    <organismsDiffer>false</organismsDiffer>
    <experiments>3</experiments>
</comment>
<comment type="interaction">
    <interactant intactId="EBI-2515774">
        <id>Q8IZ69</id>
    </interactant>
    <interactant intactId="EBI-79165">
        <id>Q9NRD5</id>
        <label>PICK1</label>
    </interactant>
    <organismsDiffer>false</organismsDiffer>
    <experiments>3</experiments>
</comment>
<comment type="interaction">
    <interactant intactId="EBI-2515774">
        <id>Q8IZ69</id>
    </interactant>
    <interactant intactId="EBI-11741437">
        <id>Q08117-2</id>
        <label>TLE5</label>
    </interactant>
    <organismsDiffer>false</organismsDiffer>
    <experiments>3</experiments>
</comment>
<comment type="interaction">
    <interactant intactId="EBI-2515774">
        <id>Q8IZ69</id>
    </interactant>
    <interactant intactId="EBI-11962574">
        <id>Q96EG3</id>
        <label>ZNF837</label>
    </interactant>
    <organismsDiffer>false</organismsDiffer>
    <experiments>3</experiments>
</comment>
<comment type="subcellular location">
    <subcellularLocation>
        <location evidence="14">Cytoplasm</location>
        <location evidence="14">Cytosol</location>
    </subcellularLocation>
</comment>
<comment type="alternative products">
    <event type="alternative splicing"/>
    <isoform>
        <id>Q8IZ69-1</id>
        <name>1</name>
        <sequence type="displayed"/>
    </isoform>
    <isoform>
        <id>Q8IZ69-2</id>
        <name>2</name>
        <sequence type="described" ref="VSP_011322 VSP_011323"/>
    </isoform>
</comment>
<comment type="similarity">
    <text evidence="4">Belongs to the class I-like SAM-binding methyltransferase superfamily. RNA M5U methyltransferase family.</text>
</comment>
<accession>Q8IZ69</accession>
<accession>D3DX25</accession>
<accession>Q32P57</accession>
<accession>Q96ME6</accession>
<accession>Q9H732</accession>
<keyword id="KW-0002">3D-structure</keyword>
<keyword id="KW-0025">Alternative splicing</keyword>
<keyword id="KW-0175">Coiled coil</keyword>
<keyword id="KW-0963">Cytoplasm</keyword>
<keyword id="KW-0489">Methyltransferase</keyword>
<keyword id="KW-0507">mRNA processing</keyword>
<keyword id="KW-0597">Phosphoprotein</keyword>
<keyword id="KW-1267">Proteomics identification</keyword>
<keyword id="KW-1185">Reference proteome</keyword>
<keyword id="KW-0694">RNA-binding</keyword>
<keyword id="KW-0949">S-adenosyl-L-methionine</keyword>
<keyword id="KW-0808">Transferase</keyword>
<keyword id="KW-0819">tRNA processing</keyword>
<gene>
    <name evidence="12 15" type="primary">TRMT2A</name>
</gene>
<feature type="chain" id="PRO_0000081614" description="tRNA (uracil-5-)-methyltransferase homolog A">
    <location>
        <begin position="1"/>
        <end position="625"/>
    </location>
</feature>
<feature type="domain" description="RRM" evidence="3">
    <location>
        <begin position="73"/>
        <end position="146"/>
    </location>
</feature>
<feature type="region of interest" description="Disordered" evidence="5">
    <location>
        <begin position="1"/>
        <end position="37"/>
    </location>
</feature>
<feature type="region of interest" description="Disordered" evidence="5">
    <location>
        <begin position="145"/>
        <end position="165"/>
    </location>
</feature>
<feature type="region of interest" description="Disordered" evidence="5">
    <location>
        <begin position="594"/>
        <end position="625"/>
    </location>
</feature>
<feature type="coiled-coil region" evidence="2">
    <location>
        <begin position="180"/>
        <end position="209"/>
    </location>
</feature>
<feature type="compositionally biased region" description="Low complexity" evidence="5">
    <location>
        <begin position="27"/>
        <end position="37"/>
    </location>
</feature>
<feature type="compositionally biased region" description="Pro residues" evidence="5">
    <location>
        <begin position="601"/>
        <end position="612"/>
    </location>
</feature>
<feature type="compositionally biased region" description="Polar residues" evidence="5">
    <location>
        <begin position="614"/>
        <end position="625"/>
    </location>
</feature>
<feature type="active site" description="Nucleophile" evidence="4">
    <location>
        <position position="538"/>
    </location>
</feature>
<feature type="active site" description="Proton acceptor" evidence="1">
    <location>
        <position position="581"/>
    </location>
</feature>
<feature type="binding site" evidence="4">
    <location>
        <position position="411"/>
    </location>
    <ligand>
        <name>S-adenosyl-L-methionine</name>
        <dbReference type="ChEBI" id="CHEBI:59789"/>
    </ligand>
</feature>
<feature type="binding site" evidence="4">
    <location>
        <position position="461"/>
    </location>
    <ligand>
        <name>S-adenosyl-L-methionine</name>
        <dbReference type="ChEBI" id="CHEBI:59789"/>
    </ligand>
</feature>
<feature type="binding site" evidence="4">
    <location>
        <position position="510"/>
    </location>
    <ligand>
        <name>S-adenosyl-L-methionine</name>
        <dbReference type="ChEBI" id="CHEBI:59789"/>
    </ligand>
</feature>
<feature type="modified residue" description="Phosphoserine" evidence="18">
    <location>
        <position position="378"/>
    </location>
</feature>
<feature type="modified residue" description="Phosphoserine" evidence="16 17">
    <location>
        <position position="602"/>
    </location>
</feature>
<feature type="splice variant" id="VSP_011322" description="In isoform 2." evidence="11">
    <original>LCRAPSNRVKGIP</original>
    <variation>APLFPPQPLQSPI</variation>
    <location>
        <begin position="550"/>
        <end position="562"/>
    </location>
</feature>
<feature type="splice variant" id="VSP_011323" description="In isoform 2." evidence="11">
    <location>
        <begin position="563"/>
        <end position="625"/>
    </location>
</feature>
<feature type="sequence variant" id="VAR_033721" description="In dbSNP:rs447017.">
    <original>S</original>
    <variation>R</variation>
    <location>
        <position position="602"/>
    </location>
</feature>
<feature type="sequence variant" id="VAR_035482" description="In a breast cancer sample; somatic mutation." evidence="6">
    <original>P</original>
    <variation>S</variation>
    <location>
        <position position="604"/>
    </location>
</feature>
<feature type="sequence conflict" description="In Ref. 2; BAB71349." evidence="13" ref="2">
    <original>S</original>
    <variation>G</variation>
    <location>
        <position position="498"/>
    </location>
</feature>
<feature type="strand" evidence="19">
    <location>
        <begin position="72"/>
        <end position="79"/>
    </location>
</feature>
<feature type="helix" evidence="19">
    <location>
        <begin position="86"/>
        <end position="95"/>
    </location>
</feature>
<feature type="strand" evidence="19">
    <location>
        <begin position="101"/>
        <end position="106"/>
    </location>
</feature>
<feature type="turn" evidence="19">
    <location>
        <begin position="107"/>
        <end position="110"/>
    </location>
</feature>
<feature type="strand" evidence="19">
    <location>
        <begin position="111"/>
        <end position="115"/>
    </location>
</feature>
<feature type="helix" evidence="19">
    <location>
        <begin position="119"/>
        <end position="129"/>
    </location>
</feature>
<feature type="strand" evidence="19">
    <location>
        <begin position="140"/>
        <end position="143"/>
    </location>
</feature>
<dbReference type="EC" id="2.1.1.35" evidence="7 8"/>
<dbReference type="EC" id="2.1.1.-" evidence="9"/>
<dbReference type="EMBL" id="CR456354">
    <property type="protein sequence ID" value="CAG30240.1"/>
    <property type="molecule type" value="mRNA"/>
</dbReference>
<dbReference type="EMBL" id="AK025106">
    <property type="protein sequence ID" value="BAB15067.1"/>
    <property type="molecule type" value="mRNA"/>
</dbReference>
<dbReference type="EMBL" id="AK057029">
    <property type="protein sequence ID" value="BAB71349.1"/>
    <property type="molecule type" value="mRNA"/>
</dbReference>
<dbReference type="EMBL" id="AC006547">
    <property type="status" value="NOT_ANNOTATED_CDS"/>
    <property type="molecule type" value="Genomic_DNA"/>
</dbReference>
<dbReference type="EMBL" id="CH471176">
    <property type="protein sequence ID" value="EAX02996.1"/>
    <property type="molecule type" value="Genomic_DNA"/>
</dbReference>
<dbReference type="EMBL" id="CH471176">
    <property type="protein sequence ID" value="EAX02997.1"/>
    <property type="molecule type" value="Genomic_DNA"/>
</dbReference>
<dbReference type="EMBL" id="BC013352">
    <property type="protein sequence ID" value="AAH13352.2"/>
    <property type="molecule type" value="mRNA"/>
</dbReference>
<dbReference type="EMBL" id="BC017184">
    <property type="protein sequence ID" value="AAH17184.2"/>
    <property type="molecule type" value="mRNA"/>
</dbReference>
<dbReference type="EMBL" id="BC108251">
    <property type="protein sequence ID" value="AAI08252.1"/>
    <property type="molecule type" value="mRNA"/>
</dbReference>
<dbReference type="CCDS" id="CCDS13774.1">
    <molecule id="Q8IZ69-1"/>
</dbReference>
<dbReference type="CCDS" id="CCDS58793.1">
    <molecule id="Q8IZ69-2"/>
</dbReference>
<dbReference type="RefSeq" id="NP_001244923.1">
    <molecule id="Q8IZ69-2"/>
    <property type="nucleotide sequence ID" value="NM_001257994.2"/>
</dbReference>
<dbReference type="RefSeq" id="NP_073564.3">
    <molecule id="Q8IZ69-1"/>
    <property type="nucleotide sequence ID" value="NM_022727.5"/>
</dbReference>
<dbReference type="RefSeq" id="NP_892029.2">
    <molecule id="Q8IZ69-1"/>
    <property type="nucleotide sequence ID" value="NM_182984.4"/>
</dbReference>
<dbReference type="PDB" id="7NTN">
    <property type="method" value="X-ray"/>
    <property type="resolution" value="2.02 A"/>
    <property type="chains" value="A=69-147"/>
</dbReference>
<dbReference type="PDB" id="7NTO">
    <property type="method" value="X-ray"/>
    <property type="resolution" value="1.23 A"/>
    <property type="chains" value="A=69-147"/>
</dbReference>
<dbReference type="PDBsum" id="7NTN"/>
<dbReference type="PDBsum" id="7NTO"/>
<dbReference type="SMR" id="Q8IZ69"/>
<dbReference type="BioGRID" id="117968">
    <property type="interactions" value="192"/>
</dbReference>
<dbReference type="FunCoup" id="Q8IZ69">
    <property type="interactions" value="2127"/>
</dbReference>
<dbReference type="IntAct" id="Q8IZ69">
    <property type="interactions" value="120"/>
</dbReference>
<dbReference type="MINT" id="Q8IZ69"/>
<dbReference type="STRING" id="9606.ENSP00000395738"/>
<dbReference type="GlyGen" id="Q8IZ69">
    <property type="glycosylation" value="2 sites, 1 O-linked glycan (1 site)"/>
</dbReference>
<dbReference type="iPTMnet" id="Q8IZ69"/>
<dbReference type="PhosphoSitePlus" id="Q8IZ69"/>
<dbReference type="BioMuta" id="TRMT2A"/>
<dbReference type="DMDM" id="51316479"/>
<dbReference type="jPOST" id="Q8IZ69"/>
<dbReference type="MassIVE" id="Q8IZ69"/>
<dbReference type="PaxDb" id="9606-ENSP00000252136"/>
<dbReference type="PeptideAtlas" id="Q8IZ69"/>
<dbReference type="ProteomicsDB" id="71283">
    <molecule id="Q8IZ69-1"/>
</dbReference>
<dbReference type="ProteomicsDB" id="71284">
    <molecule id="Q8IZ69-2"/>
</dbReference>
<dbReference type="Pumba" id="Q8IZ69"/>
<dbReference type="Antibodypedia" id="250">
    <property type="antibodies" value="348 antibodies from 26 providers"/>
</dbReference>
<dbReference type="DNASU" id="27037"/>
<dbReference type="Ensembl" id="ENST00000252136.12">
    <molecule id="Q8IZ69-1"/>
    <property type="protein sequence ID" value="ENSP00000252136.7"/>
    <property type="gene ID" value="ENSG00000099899.16"/>
</dbReference>
<dbReference type="Ensembl" id="ENST00000403707.7">
    <molecule id="Q8IZ69-1"/>
    <property type="protein sequence ID" value="ENSP00000385807.3"/>
    <property type="gene ID" value="ENSG00000099899.16"/>
</dbReference>
<dbReference type="Ensembl" id="ENST00000404751.7">
    <molecule id="Q8IZ69-2"/>
    <property type="protein sequence ID" value="ENSP00000384968.3"/>
    <property type="gene ID" value="ENSG00000099899.16"/>
</dbReference>
<dbReference type="GeneID" id="27037"/>
<dbReference type="KEGG" id="hsa:27037"/>
<dbReference type="MANE-Select" id="ENST00000252136.12">
    <property type="protein sequence ID" value="ENSP00000252136.7"/>
    <property type="RefSeq nucleotide sequence ID" value="NM_022727.6"/>
    <property type="RefSeq protein sequence ID" value="NP_073564.3"/>
</dbReference>
<dbReference type="UCSC" id="uc002zrk.3">
    <molecule id="Q8IZ69-1"/>
    <property type="organism name" value="human"/>
</dbReference>
<dbReference type="AGR" id="HGNC:24974"/>
<dbReference type="CTD" id="27037"/>
<dbReference type="DisGeNET" id="27037"/>
<dbReference type="GeneCards" id="TRMT2A"/>
<dbReference type="HGNC" id="HGNC:24974">
    <property type="gene designation" value="TRMT2A"/>
</dbReference>
<dbReference type="HPA" id="ENSG00000099899">
    <property type="expression patterns" value="Low tissue specificity"/>
</dbReference>
<dbReference type="MIM" id="611151">
    <property type="type" value="gene"/>
</dbReference>
<dbReference type="neXtProt" id="NX_Q8IZ69"/>
<dbReference type="OpenTargets" id="ENSG00000099899"/>
<dbReference type="PharmGKB" id="PA164726751"/>
<dbReference type="VEuPathDB" id="HostDB:ENSG00000099899"/>
<dbReference type="eggNOG" id="KOG2187">
    <property type="taxonomic scope" value="Eukaryota"/>
</dbReference>
<dbReference type="GeneTree" id="ENSGT00530000063723"/>
<dbReference type="HOGENOM" id="CLU_014689_4_2_1"/>
<dbReference type="InParanoid" id="Q8IZ69"/>
<dbReference type="OrthoDB" id="10250660at2759"/>
<dbReference type="PAN-GO" id="Q8IZ69">
    <property type="GO annotations" value="0 GO annotations based on evolutionary models"/>
</dbReference>
<dbReference type="PhylomeDB" id="Q8IZ69"/>
<dbReference type="TreeFam" id="TF314569"/>
<dbReference type="BRENDA" id="2.1.1.35">
    <property type="organism ID" value="2681"/>
</dbReference>
<dbReference type="PathwayCommons" id="Q8IZ69"/>
<dbReference type="SignaLink" id="Q8IZ69"/>
<dbReference type="BioGRID-ORCS" id="27037">
    <property type="hits" value="23 hits in 1151 CRISPR screens"/>
</dbReference>
<dbReference type="ChiTaRS" id="TRMT2A">
    <property type="organism name" value="human"/>
</dbReference>
<dbReference type="GenomeRNAi" id="27037"/>
<dbReference type="Pharos" id="Q8IZ69">
    <property type="development level" value="Tbio"/>
</dbReference>
<dbReference type="PRO" id="PR:Q8IZ69"/>
<dbReference type="Proteomes" id="UP000005640">
    <property type="component" value="Chromosome 22"/>
</dbReference>
<dbReference type="RNAct" id="Q8IZ69">
    <property type="molecule type" value="protein"/>
</dbReference>
<dbReference type="Bgee" id="ENSG00000099899">
    <property type="expression patterns" value="Expressed in granulocyte and 132 other cell types or tissues"/>
</dbReference>
<dbReference type="ExpressionAtlas" id="Q8IZ69">
    <property type="expression patterns" value="baseline and differential"/>
</dbReference>
<dbReference type="GO" id="GO:0005829">
    <property type="term" value="C:cytosol"/>
    <property type="evidence" value="ECO:0000304"/>
    <property type="project" value="UniProtKB"/>
</dbReference>
<dbReference type="GO" id="GO:0008169">
    <property type="term" value="F:C-methyltransferase activity"/>
    <property type="evidence" value="ECO:0000314"/>
    <property type="project" value="UniProtKB"/>
</dbReference>
<dbReference type="GO" id="GO:0003723">
    <property type="term" value="F:RNA binding"/>
    <property type="evidence" value="ECO:0007005"/>
    <property type="project" value="UniProtKB"/>
</dbReference>
<dbReference type="GO" id="GO:0030697">
    <property type="term" value="F:tRNA (uracil(54)-C5)-methyltransferase activity, S-adenosyl methionine-dependent"/>
    <property type="evidence" value="ECO:0000314"/>
    <property type="project" value="UniProtKB"/>
</dbReference>
<dbReference type="GO" id="GO:0032259">
    <property type="term" value="P:methylation"/>
    <property type="evidence" value="ECO:0007669"/>
    <property type="project" value="UniProtKB-KW"/>
</dbReference>
<dbReference type="GO" id="GO:0006397">
    <property type="term" value="P:mRNA processing"/>
    <property type="evidence" value="ECO:0007669"/>
    <property type="project" value="UniProtKB-KW"/>
</dbReference>
<dbReference type="GO" id="GO:0008033">
    <property type="term" value="P:tRNA processing"/>
    <property type="evidence" value="ECO:0007669"/>
    <property type="project" value="UniProtKB-KW"/>
</dbReference>
<dbReference type="CDD" id="cd02440">
    <property type="entry name" value="AdoMet_MTases"/>
    <property type="match status" value="1"/>
</dbReference>
<dbReference type="CDD" id="cd12439">
    <property type="entry name" value="RRM_TRMT2A"/>
    <property type="match status" value="1"/>
</dbReference>
<dbReference type="FunFam" id="2.40.50.1070:FF:000005">
    <property type="entry name" value="tRNA (Uracil-5-)-methyltransferase homolog A isoform X1"/>
    <property type="match status" value="1"/>
</dbReference>
<dbReference type="Gene3D" id="2.40.50.1070">
    <property type="match status" value="1"/>
</dbReference>
<dbReference type="Gene3D" id="3.30.70.330">
    <property type="match status" value="1"/>
</dbReference>
<dbReference type="Gene3D" id="3.40.50.150">
    <property type="entry name" value="Vaccinia Virus protein VP39"/>
    <property type="match status" value="1"/>
</dbReference>
<dbReference type="InterPro" id="IPR012677">
    <property type="entry name" value="Nucleotide-bd_a/b_plait_sf"/>
</dbReference>
<dbReference type="InterPro" id="IPR035979">
    <property type="entry name" value="RBD_domain_sf"/>
</dbReference>
<dbReference type="InterPro" id="IPR000504">
    <property type="entry name" value="RRM_dom"/>
</dbReference>
<dbReference type="InterPro" id="IPR029063">
    <property type="entry name" value="SAM-dependent_MTases_sf"/>
</dbReference>
<dbReference type="InterPro" id="IPR045850">
    <property type="entry name" value="TRM2_met"/>
</dbReference>
<dbReference type="InterPro" id="IPR034262">
    <property type="entry name" value="TRMT2A_RRM"/>
</dbReference>
<dbReference type="InterPro" id="IPR010280">
    <property type="entry name" value="U5_MeTrfase_fam"/>
</dbReference>
<dbReference type="PANTHER" id="PTHR45904">
    <property type="entry name" value="TRNA (URACIL-5-)-METHYLTRANSFERASE"/>
    <property type="match status" value="1"/>
</dbReference>
<dbReference type="PANTHER" id="PTHR45904:SF2">
    <property type="entry name" value="TRNA (URACIL-5-)-METHYLTRANSFERASE HOMOLOG A"/>
    <property type="match status" value="1"/>
</dbReference>
<dbReference type="Pfam" id="PF05958">
    <property type="entry name" value="tRNA_U5-meth_tr"/>
    <property type="match status" value="1"/>
</dbReference>
<dbReference type="SUPFAM" id="SSF54928">
    <property type="entry name" value="RNA-binding domain, RBD"/>
    <property type="match status" value="1"/>
</dbReference>
<dbReference type="SUPFAM" id="SSF53335">
    <property type="entry name" value="S-adenosyl-L-methionine-dependent methyltransferases"/>
    <property type="match status" value="1"/>
</dbReference>
<dbReference type="PROSITE" id="PS50102">
    <property type="entry name" value="RRM"/>
    <property type="match status" value="1"/>
</dbReference>
<dbReference type="PROSITE" id="PS51687">
    <property type="entry name" value="SAM_MT_RNA_M5U"/>
    <property type="match status" value="1"/>
</dbReference>
<protein>
    <recommendedName>
        <fullName evidence="13">tRNA (uracil-5-)-methyltransferase homolog A</fullName>
        <ecNumber evidence="7 8">2.1.1.35</ecNumber>
    </recommendedName>
    <alternativeName>
        <fullName evidence="13">mRNA (uracil-5-)-methyltransferase TRMT2A</fullName>
        <ecNumber evidence="9">2.1.1.-</ecNumber>
    </alternativeName>
</protein>
<name>TRM2A_HUMAN</name>
<reference key="1">
    <citation type="journal article" date="2004" name="Genome Biol.">
        <title>A genome annotation-driven approach to cloning the human ORFeome.</title>
        <authorList>
            <person name="Collins J.E."/>
            <person name="Wright C.L."/>
            <person name="Edwards C.A."/>
            <person name="Davis M.P."/>
            <person name="Grinham J.A."/>
            <person name="Cole C.G."/>
            <person name="Goward M.E."/>
            <person name="Aguado B."/>
            <person name="Mallya M."/>
            <person name="Mokrab Y."/>
            <person name="Huckle E.J."/>
            <person name="Beare D.M."/>
            <person name="Dunham I."/>
        </authorList>
    </citation>
    <scope>NUCLEOTIDE SEQUENCE [LARGE SCALE MRNA] (ISOFORM 1)</scope>
</reference>
<reference key="2">
    <citation type="journal article" date="2004" name="Nat. Genet.">
        <title>Complete sequencing and characterization of 21,243 full-length human cDNAs.</title>
        <authorList>
            <person name="Ota T."/>
            <person name="Suzuki Y."/>
            <person name="Nishikawa T."/>
            <person name="Otsuki T."/>
            <person name="Sugiyama T."/>
            <person name="Irie R."/>
            <person name="Wakamatsu A."/>
            <person name="Hayashi K."/>
            <person name="Sato H."/>
            <person name="Nagai K."/>
            <person name="Kimura K."/>
            <person name="Makita H."/>
            <person name="Sekine M."/>
            <person name="Obayashi M."/>
            <person name="Nishi T."/>
            <person name="Shibahara T."/>
            <person name="Tanaka T."/>
            <person name="Ishii S."/>
            <person name="Yamamoto J."/>
            <person name="Saito K."/>
            <person name="Kawai Y."/>
            <person name="Isono Y."/>
            <person name="Nakamura Y."/>
            <person name="Nagahari K."/>
            <person name="Murakami K."/>
            <person name="Yasuda T."/>
            <person name="Iwayanagi T."/>
            <person name="Wagatsuma M."/>
            <person name="Shiratori A."/>
            <person name="Sudo H."/>
            <person name="Hosoiri T."/>
            <person name="Kaku Y."/>
            <person name="Kodaira H."/>
            <person name="Kondo H."/>
            <person name="Sugawara M."/>
            <person name="Takahashi M."/>
            <person name="Kanda K."/>
            <person name="Yokoi T."/>
            <person name="Furuya T."/>
            <person name="Kikkawa E."/>
            <person name="Omura Y."/>
            <person name="Abe K."/>
            <person name="Kamihara K."/>
            <person name="Katsuta N."/>
            <person name="Sato K."/>
            <person name="Tanikawa M."/>
            <person name="Yamazaki M."/>
            <person name="Ninomiya K."/>
            <person name="Ishibashi T."/>
            <person name="Yamashita H."/>
            <person name="Murakawa K."/>
            <person name="Fujimori K."/>
            <person name="Tanai H."/>
            <person name="Kimata M."/>
            <person name="Watanabe M."/>
            <person name="Hiraoka S."/>
            <person name="Chiba Y."/>
            <person name="Ishida S."/>
            <person name="Ono Y."/>
            <person name="Takiguchi S."/>
            <person name="Watanabe S."/>
            <person name="Yosida M."/>
            <person name="Hotuta T."/>
            <person name="Kusano J."/>
            <person name="Kanehori K."/>
            <person name="Takahashi-Fujii A."/>
            <person name="Hara H."/>
            <person name="Tanase T.-O."/>
            <person name="Nomura Y."/>
            <person name="Togiya S."/>
            <person name="Komai F."/>
            <person name="Hara R."/>
            <person name="Takeuchi K."/>
            <person name="Arita M."/>
            <person name="Imose N."/>
            <person name="Musashino K."/>
            <person name="Yuuki H."/>
            <person name="Oshima A."/>
            <person name="Sasaki N."/>
            <person name="Aotsuka S."/>
            <person name="Yoshikawa Y."/>
            <person name="Matsunawa H."/>
            <person name="Ichihara T."/>
            <person name="Shiohata N."/>
            <person name="Sano S."/>
            <person name="Moriya S."/>
            <person name="Momiyama H."/>
            <person name="Satoh N."/>
            <person name="Takami S."/>
            <person name="Terashima Y."/>
            <person name="Suzuki O."/>
            <person name="Nakagawa S."/>
            <person name="Senoh A."/>
            <person name="Mizoguchi H."/>
            <person name="Goto Y."/>
            <person name="Shimizu F."/>
            <person name="Wakebe H."/>
            <person name="Hishigaki H."/>
            <person name="Watanabe T."/>
            <person name="Sugiyama A."/>
            <person name="Takemoto M."/>
            <person name="Kawakami B."/>
            <person name="Yamazaki M."/>
            <person name="Watanabe K."/>
            <person name="Kumagai A."/>
            <person name="Itakura S."/>
            <person name="Fukuzumi Y."/>
            <person name="Fujimori Y."/>
            <person name="Komiyama M."/>
            <person name="Tashiro H."/>
            <person name="Tanigami A."/>
            <person name="Fujiwara T."/>
            <person name="Ono T."/>
            <person name="Yamada K."/>
            <person name="Fujii Y."/>
            <person name="Ozaki K."/>
            <person name="Hirao M."/>
            <person name="Ohmori Y."/>
            <person name="Kawabata A."/>
            <person name="Hikiji T."/>
            <person name="Kobatake N."/>
            <person name="Inagaki H."/>
            <person name="Ikema Y."/>
            <person name="Okamoto S."/>
            <person name="Okitani R."/>
            <person name="Kawakami T."/>
            <person name="Noguchi S."/>
            <person name="Itoh T."/>
            <person name="Shigeta K."/>
            <person name="Senba T."/>
            <person name="Matsumura K."/>
            <person name="Nakajima Y."/>
            <person name="Mizuno T."/>
            <person name="Morinaga M."/>
            <person name="Sasaki M."/>
            <person name="Togashi T."/>
            <person name="Oyama M."/>
            <person name="Hata H."/>
            <person name="Watanabe M."/>
            <person name="Komatsu T."/>
            <person name="Mizushima-Sugano J."/>
            <person name="Satoh T."/>
            <person name="Shirai Y."/>
            <person name="Takahashi Y."/>
            <person name="Nakagawa K."/>
            <person name="Okumura K."/>
            <person name="Nagase T."/>
            <person name="Nomura N."/>
            <person name="Kikuchi H."/>
            <person name="Masuho Y."/>
            <person name="Yamashita R."/>
            <person name="Nakai K."/>
            <person name="Yada T."/>
            <person name="Nakamura Y."/>
            <person name="Ohara O."/>
            <person name="Isogai T."/>
            <person name="Sugano S."/>
        </authorList>
    </citation>
    <scope>NUCLEOTIDE SEQUENCE [LARGE SCALE MRNA] (ISOFORMS 1 AND 2)</scope>
    <source>
        <tissue>Colon</tissue>
    </source>
</reference>
<reference key="3">
    <citation type="journal article" date="1999" name="Nature">
        <title>The DNA sequence of human chromosome 22.</title>
        <authorList>
            <person name="Dunham I."/>
            <person name="Hunt A.R."/>
            <person name="Collins J.E."/>
            <person name="Bruskiewich R."/>
            <person name="Beare D.M."/>
            <person name="Clamp M."/>
            <person name="Smink L.J."/>
            <person name="Ainscough R."/>
            <person name="Almeida J.P."/>
            <person name="Babbage A.K."/>
            <person name="Bagguley C."/>
            <person name="Bailey J."/>
            <person name="Barlow K.F."/>
            <person name="Bates K.N."/>
            <person name="Beasley O.P."/>
            <person name="Bird C.P."/>
            <person name="Blakey S.E."/>
            <person name="Bridgeman A.M."/>
            <person name="Buck D."/>
            <person name="Burgess J."/>
            <person name="Burrill W.D."/>
            <person name="Burton J."/>
            <person name="Carder C."/>
            <person name="Carter N.P."/>
            <person name="Chen Y."/>
            <person name="Clark G."/>
            <person name="Clegg S.M."/>
            <person name="Cobley V.E."/>
            <person name="Cole C.G."/>
            <person name="Collier R.E."/>
            <person name="Connor R."/>
            <person name="Conroy D."/>
            <person name="Corby N.R."/>
            <person name="Coville G.J."/>
            <person name="Cox A.V."/>
            <person name="Davis J."/>
            <person name="Dawson E."/>
            <person name="Dhami P.D."/>
            <person name="Dockree C."/>
            <person name="Dodsworth S.J."/>
            <person name="Durbin R.M."/>
            <person name="Ellington A.G."/>
            <person name="Evans K.L."/>
            <person name="Fey J.M."/>
            <person name="Fleming K."/>
            <person name="French L."/>
            <person name="Garner A.A."/>
            <person name="Gilbert J.G.R."/>
            <person name="Goward M.E."/>
            <person name="Grafham D.V."/>
            <person name="Griffiths M.N.D."/>
            <person name="Hall C."/>
            <person name="Hall R.E."/>
            <person name="Hall-Tamlyn G."/>
            <person name="Heathcott R.W."/>
            <person name="Ho S."/>
            <person name="Holmes S."/>
            <person name="Hunt S.E."/>
            <person name="Jones M.C."/>
            <person name="Kershaw J."/>
            <person name="Kimberley A.M."/>
            <person name="King A."/>
            <person name="Laird G.K."/>
            <person name="Langford C.F."/>
            <person name="Leversha M.A."/>
            <person name="Lloyd C."/>
            <person name="Lloyd D.M."/>
            <person name="Martyn I.D."/>
            <person name="Mashreghi-Mohammadi M."/>
            <person name="Matthews L.H."/>
            <person name="Mccann O.T."/>
            <person name="Mcclay J."/>
            <person name="Mclaren S."/>
            <person name="McMurray A.A."/>
            <person name="Milne S.A."/>
            <person name="Mortimore B.J."/>
            <person name="Odell C.N."/>
            <person name="Pavitt R."/>
            <person name="Pearce A.V."/>
            <person name="Pearson D."/>
            <person name="Phillimore B.J.C.T."/>
            <person name="Phillips S.H."/>
            <person name="Plumb R.W."/>
            <person name="Ramsay H."/>
            <person name="Ramsey Y."/>
            <person name="Rogers L."/>
            <person name="Ross M.T."/>
            <person name="Scott C.E."/>
            <person name="Sehra H.K."/>
            <person name="Skuce C.D."/>
            <person name="Smalley S."/>
            <person name="Smith M.L."/>
            <person name="Soderlund C."/>
            <person name="Spragon L."/>
            <person name="Steward C.A."/>
            <person name="Sulston J.E."/>
            <person name="Swann R.M."/>
            <person name="Vaudin M."/>
            <person name="Wall M."/>
            <person name="Wallis J.M."/>
            <person name="Whiteley M.N."/>
            <person name="Willey D.L."/>
            <person name="Williams L."/>
            <person name="Williams S.A."/>
            <person name="Williamson H."/>
            <person name="Wilmer T.E."/>
            <person name="Wilming L."/>
            <person name="Wright C.L."/>
            <person name="Hubbard T."/>
            <person name="Bentley D.R."/>
            <person name="Beck S."/>
            <person name="Rogers J."/>
            <person name="Shimizu N."/>
            <person name="Minoshima S."/>
            <person name="Kawasaki K."/>
            <person name="Sasaki T."/>
            <person name="Asakawa S."/>
            <person name="Kudoh J."/>
            <person name="Shintani A."/>
            <person name="Shibuya K."/>
            <person name="Yoshizaki Y."/>
            <person name="Aoki N."/>
            <person name="Mitsuyama S."/>
            <person name="Roe B.A."/>
            <person name="Chen F."/>
            <person name="Chu L."/>
            <person name="Crabtree J."/>
            <person name="Deschamps S."/>
            <person name="Do A."/>
            <person name="Do T."/>
            <person name="Dorman A."/>
            <person name="Fang F."/>
            <person name="Fu Y."/>
            <person name="Hu P."/>
            <person name="Hua A."/>
            <person name="Kenton S."/>
            <person name="Lai H."/>
            <person name="Lao H.I."/>
            <person name="Lewis J."/>
            <person name="Lewis S."/>
            <person name="Lin S.-P."/>
            <person name="Loh P."/>
            <person name="Malaj E."/>
            <person name="Nguyen T."/>
            <person name="Pan H."/>
            <person name="Phan S."/>
            <person name="Qi S."/>
            <person name="Qian Y."/>
            <person name="Ray L."/>
            <person name="Ren Q."/>
            <person name="Shaull S."/>
            <person name="Sloan D."/>
            <person name="Song L."/>
            <person name="Wang Q."/>
            <person name="Wang Y."/>
            <person name="Wang Z."/>
            <person name="White J."/>
            <person name="Willingham D."/>
            <person name="Wu H."/>
            <person name="Yao Z."/>
            <person name="Zhan M."/>
            <person name="Zhang G."/>
            <person name="Chissoe S."/>
            <person name="Murray J."/>
            <person name="Miller N."/>
            <person name="Minx P."/>
            <person name="Fulton R."/>
            <person name="Johnson D."/>
            <person name="Bemis G."/>
            <person name="Bentley D."/>
            <person name="Bradshaw H."/>
            <person name="Bourne S."/>
            <person name="Cordes M."/>
            <person name="Du Z."/>
            <person name="Fulton L."/>
            <person name="Goela D."/>
            <person name="Graves T."/>
            <person name="Hawkins J."/>
            <person name="Hinds K."/>
            <person name="Kemp K."/>
            <person name="Latreille P."/>
            <person name="Layman D."/>
            <person name="Ozersky P."/>
            <person name="Rohlfing T."/>
            <person name="Scheet P."/>
            <person name="Walker C."/>
            <person name="Wamsley A."/>
            <person name="Wohldmann P."/>
            <person name="Pepin K."/>
            <person name="Nelson J."/>
            <person name="Korf I."/>
            <person name="Bedell J.A."/>
            <person name="Hillier L.W."/>
            <person name="Mardis E."/>
            <person name="Waterston R."/>
            <person name="Wilson R."/>
            <person name="Emanuel B.S."/>
            <person name="Shaikh T."/>
            <person name="Kurahashi H."/>
            <person name="Saitta S."/>
            <person name="Budarf M.L."/>
            <person name="McDermid H.E."/>
            <person name="Johnson A."/>
            <person name="Wong A.C.C."/>
            <person name="Morrow B.E."/>
            <person name="Edelmann L."/>
            <person name="Kim U.J."/>
            <person name="Shizuya H."/>
            <person name="Simon M.I."/>
            <person name="Dumanski J.P."/>
            <person name="Peyrard M."/>
            <person name="Kedra D."/>
            <person name="Seroussi E."/>
            <person name="Fransson I."/>
            <person name="Tapia I."/>
            <person name="Bruder C.E."/>
            <person name="O'Brien K.P."/>
            <person name="Wilkinson P."/>
            <person name="Bodenteich A."/>
            <person name="Hartman K."/>
            <person name="Hu X."/>
            <person name="Khan A.S."/>
            <person name="Lane L."/>
            <person name="Tilahun Y."/>
            <person name="Wright H."/>
        </authorList>
    </citation>
    <scope>NUCLEOTIDE SEQUENCE [LARGE SCALE GENOMIC DNA]</scope>
</reference>
<reference key="4">
    <citation type="submission" date="2005-09" db="EMBL/GenBank/DDBJ databases">
        <authorList>
            <person name="Mural R.J."/>
            <person name="Istrail S."/>
            <person name="Sutton G.G."/>
            <person name="Florea L."/>
            <person name="Halpern A.L."/>
            <person name="Mobarry C.M."/>
            <person name="Lippert R."/>
            <person name="Walenz B."/>
            <person name="Shatkay H."/>
            <person name="Dew I."/>
            <person name="Miller J.R."/>
            <person name="Flanigan M.J."/>
            <person name="Edwards N.J."/>
            <person name="Bolanos R."/>
            <person name="Fasulo D."/>
            <person name="Halldorsson B.V."/>
            <person name="Hannenhalli S."/>
            <person name="Turner R."/>
            <person name="Yooseph S."/>
            <person name="Lu F."/>
            <person name="Nusskern D.R."/>
            <person name="Shue B.C."/>
            <person name="Zheng X.H."/>
            <person name="Zhong F."/>
            <person name="Delcher A.L."/>
            <person name="Huson D.H."/>
            <person name="Kravitz S.A."/>
            <person name="Mouchard L."/>
            <person name="Reinert K."/>
            <person name="Remington K.A."/>
            <person name="Clark A.G."/>
            <person name="Waterman M.S."/>
            <person name="Eichler E.E."/>
            <person name="Adams M.D."/>
            <person name="Hunkapiller M.W."/>
            <person name="Myers E.W."/>
            <person name="Venter J.C."/>
        </authorList>
    </citation>
    <scope>NUCLEOTIDE SEQUENCE [LARGE SCALE GENOMIC DNA]</scope>
</reference>
<reference key="5">
    <citation type="journal article" date="2004" name="Genome Res.">
        <title>The status, quality, and expansion of the NIH full-length cDNA project: the Mammalian Gene Collection (MGC).</title>
        <authorList>
            <consortium name="The MGC Project Team"/>
        </authorList>
    </citation>
    <scope>NUCLEOTIDE SEQUENCE [LARGE SCALE MRNA] (ISOFORM 1)</scope>
    <source>
        <tissue>B-cell</tissue>
        <tissue>Colon</tissue>
        <tissue>Kidney</tissue>
    </source>
</reference>
<reference key="6">
    <citation type="journal article" date="2008" name="Proc. Natl. Acad. Sci. U.S.A.">
        <title>A quantitative atlas of mitotic phosphorylation.</title>
        <authorList>
            <person name="Dephoure N."/>
            <person name="Zhou C."/>
            <person name="Villen J."/>
            <person name="Beausoleil S.A."/>
            <person name="Bakalarski C.E."/>
            <person name="Elledge S.J."/>
            <person name="Gygi S.P."/>
        </authorList>
    </citation>
    <scope>PHOSPHORYLATION [LARGE SCALE ANALYSIS] AT SER-602</scope>
    <scope>IDENTIFICATION BY MASS SPECTROMETRY [LARGE SCALE ANALYSIS]</scope>
    <source>
        <tissue>Cervix carcinoma</tissue>
    </source>
</reference>
<reference key="7">
    <citation type="journal article" date="2009" name="Sci. Signal.">
        <title>Quantitative phosphoproteomic analysis of T cell receptor signaling reveals system-wide modulation of protein-protein interactions.</title>
        <authorList>
            <person name="Mayya V."/>
            <person name="Lundgren D.H."/>
            <person name="Hwang S.-I."/>
            <person name="Rezaul K."/>
            <person name="Wu L."/>
            <person name="Eng J.K."/>
            <person name="Rodionov V."/>
            <person name="Han D.K."/>
        </authorList>
    </citation>
    <scope>PHOSPHORYLATION [LARGE SCALE ANALYSIS] AT SER-602</scope>
    <scope>IDENTIFICATION BY MASS SPECTROMETRY [LARGE SCALE ANALYSIS]</scope>
    <source>
        <tissue>Leukemic T-cell</tissue>
    </source>
</reference>
<reference key="8">
    <citation type="journal article" date="2010" name="Sci. Signal.">
        <title>Quantitative phosphoproteomics reveals widespread full phosphorylation site occupancy during mitosis.</title>
        <authorList>
            <person name="Olsen J.V."/>
            <person name="Vermeulen M."/>
            <person name="Santamaria A."/>
            <person name="Kumar C."/>
            <person name="Miller M.L."/>
            <person name="Jensen L.J."/>
            <person name="Gnad F."/>
            <person name="Cox J."/>
            <person name="Jensen T.S."/>
            <person name="Nigg E.A."/>
            <person name="Brunak S."/>
            <person name="Mann M."/>
        </authorList>
    </citation>
    <scope>IDENTIFICATION BY MASS SPECTROMETRY [LARGE SCALE ANALYSIS]</scope>
    <source>
        <tissue>Cervix carcinoma</tissue>
    </source>
</reference>
<reference key="9">
    <citation type="journal article" date="2011" name="BMC Syst. Biol.">
        <title>Initial characterization of the human central proteome.</title>
        <authorList>
            <person name="Burkard T.R."/>
            <person name="Planyavsky M."/>
            <person name="Kaupe I."/>
            <person name="Breitwieser F.P."/>
            <person name="Buerckstuemmer T."/>
            <person name="Bennett K.L."/>
            <person name="Superti-Furga G."/>
            <person name="Colinge J."/>
        </authorList>
    </citation>
    <scope>IDENTIFICATION BY MASS SPECTROMETRY [LARGE SCALE ANALYSIS]</scope>
</reference>
<reference key="10">
    <citation type="journal article" date="2013" name="J. Proteome Res.">
        <title>Toward a comprehensive characterization of a human cancer cell phosphoproteome.</title>
        <authorList>
            <person name="Zhou H."/>
            <person name="Di Palma S."/>
            <person name="Preisinger C."/>
            <person name="Peng M."/>
            <person name="Polat A.N."/>
            <person name="Heck A.J."/>
            <person name="Mohammed S."/>
        </authorList>
    </citation>
    <scope>PHOSPHORYLATION [LARGE SCALE ANALYSIS] AT SER-378</scope>
    <scope>IDENTIFICATION BY MASS SPECTROMETRY [LARGE SCALE ANALYSIS]</scope>
    <source>
        <tissue>Cervix carcinoma</tissue>
        <tissue>Erythroleukemia</tissue>
    </source>
</reference>
<reference key="11">
    <citation type="journal article" date="2006" name="Science">
        <title>The consensus coding sequences of human breast and colorectal cancers.</title>
        <authorList>
            <person name="Sjoeblom T."/>
            <person name="Jones S."/>
            <person name="Wood L.D."/>
            <person name="Parsons D.W."/>
            <person name="Lin J."/>
            <person name="Barber T.D."/>
            <person name="Mandelker D."/>
            <person name="Leary R.J."/>
            <person name="Ptak J."/>
            <person name="Silliman N."/>
            <person name="Szabo S."/>
            <person name="Buckhaults P."/>
            <person name="Farrell C."/>
            <person name="Meeh P."/>
            <person name="Markowitz S.D."/>
            <person name="Willis J."/>
            <person name="Dawson D."/>
            <person name="Willson J.K.V."/>
            <person name="Gazdar A.F."/>
            <person name="Hartigan J."/>
            <person name="Wu L."/>
            <person name="Liu C."/>
            <person name="Parmigiani G."/>
            <person name="Park B.H."/>
            <person name="Bachman K.E."/>
            <person name="Papadopoulos N."/>
            <person name="Vogelstein B."/>
            <person name="Kinzler K.W."/>
            <person name="Velculescu V.E."/>
        </authorList>
    </citation>
    <scope>VARIANT [LARGE SCALE ANALYSIS] SER-604</scope>
</reference>
<reference key="12">
    <citation type="journal article" date="2019" name="Nucleic Acids Res.">
        <title>FICC-Seq: a method for enzyme-specified profiling of methyl-5-uridine in cellular RNA.</title>
        <authorList>
            <person name="Carter J.M."/>
            <person name="Emmett W."/>
            <person name="Mozos I.R."/>
            <person name="Kotter A."/>
            <person name="Helm M."/>
            <person name="Ule J."/>
            <person name="Hussain S."/>
        </authorList>
    </citation>
    <scope>FUNCTION</scope>
    <scope>CATALYTIC ACTIVITY</scope>
    <scope>SUBCELLULAR LOCATION</scope>
</reference>
<reference key="13">
    <citation type="journal article" date="2020" name="Chem. Sci.">
        <title>Chemical tagging for sensitive determination of uridine modifications in RNA.</title>
        <authorList>
            <person name="Cheng Q.Y."/>
            <person name="Xiong J."/>
            <person name="Ma C.J."/>
            <person name="Dai Y."/>
            <person name="Ding J.H."/>
            <person name="Liu F.L."/>
            <person name="Yuan B.F."/>
            <person name="Feng Y.Q."/>
        </authorList>
    </citation>
    <scope>FUNCTION</scope>
    <scope>CATALYTIC ACTIVITY</scope>
</reference>
<reference key="14">
    <citation type="journal article" date="2021" name="Int. J. Mol. Sci.">
        <title>m5U54 tRNA hypomodification by lack of TRMT2A drives the generation of tRNA-derived small RNAs.</title>
        <authorList>
            <person name="Pereira M."/>
            <person name="Ribeiro D.R."/>
            <person name="Pinheiro M.M."/>
            <person name="Ferreira M."/>
            <person name="Kellner S."/>
            <person name="Soares A.R."/>
        </authorList>
    </citation>
    <scope>FUNCTION</scope>
    <scope>CATALYTIC ACTIVITY</scope>
</reference>
<reference key="15">
    <citation type="journal article" date="2021" name="Nat. Chem. Biol.">
        <title>Activity-based RNA-modifying enzyme probing reveals DUS3L-mediated dihydrouridylation.</title>
        <authorList>
            <person name="Dai W."/>
            <person name="Li A."/>
            <person name="Yu N.J."/>
            <person name="Nguyen T."/>
            <person name="Leach R.W."/>
            <person name="Wuehr M."/>
            <person name="Kleiner R.E."/>
        </authorList>
    </citation>
    <scope>FUNCTION</scope>
</reference>
<sequence length="625" mass="68726">MSENLDNEGPKPMESCGQESSSALSCPTVSVPPAAPAALEEVEKEGAGAATGPGPQPGLYSYIRDDLFTSEIFKLELQNVPRHASFSDVRRFLGRFGLQPHKTKLFGQPPCAFVTFRSAAERDKALRVLHGALWKGRPLSVRLARPKADPMARRRRQEGESEPPVTRVADVVTPLWTVPYAEQLERKQLECEQVLQKLAKEIGSTNRALLPWLLEQRHKHNKACCPLEGVRPSPQQTEYRNKCEFLVGVGVDGEDNTVGCRLGKYKGGTCAVAAPFDTVHIPEATKQVVKAFQEFIRSTPYSAYDPETYTGHWKQLTVRTSRRHQAMAIAYFHPQKLSPEELAELKTSLAQHFTAGPGRASGVTCLYFVEEGQRKTPSQEGLPLEHVAGDRCIHEDLLGLTFRISPHAFFQVNTPAAEVLYTVIQDWAQLDAGSMVLDVCCGTGTIGLALARKVKRVIGVELCPEAVEDARVNAQDNELSNVEFHCGRAEDLVPTLVSRLASQHLVAILDPPRAGLHSKVILAIRRAKNLRRLLYVSCNPRAAMGNFVDLCRAPSNRVKGIPFRPVKAVAVDLFPQTPHCEMLILFERVEHPNGTGVLGPHSPPAQPTPGPPDNTLQETGTFPSS</sequence>
<organism>
    <name type="scientific">Homo sapiens</name>
    <name type="common">Human</name>
    <dbReference type="NCBI Taxonomy" id="9606"/>
    <lineage>
        <taxon>Eukaryota</taxon>
        <taxon>Metazoa</taxon>
        <taxon>Chordata</taxon>
        <taxon>Craniata</taxon>
        <taxon>Vertebrata</taxon>
        <taxon>Euteleostomi</taxon>
        <taxon>Mammalia</taxon>
        <taxon>Eutheria</taxon>
        <taxon>Euarchontoglires</taxon>
        <taxon>Primates</taxon>
        <taxon>Haplorrhini</taxon>
        <taxon>Catarrhini</taxon>
        <taxon>Hominidae</taxon>
        <taxon>Homo</taxon>
    </lineage>
</organism>
<evidence type="ECO:0000250" key="1">
    <source>
        <dbReference type="UniProtKB" id="P23003"/>
    </source>
</evidence>
<evidence type="ECO:0000255" key="2"/>
<evidence type="ECO:0000255" key="3">
    <source>
        <dbReference type="PROSITE-ProRule" id="PRU00176"/>
    </source>
</evidence>
<evidence type="ECO:0000255" key="4">
    <source>
        <dbReference type="PROSITE-ProRule" id="PRU01024"/>
    </source>
</evidence>
<evidence type="ECO:0000256" key="5">
    <source>
        <dbReference type="SAM" id="MobiDB-lite"/>
    </source>
</evidence>
<evidence type="ECO:0000269" key="6">
    <source>
    </source>
</evidence>
<evidence type="ECO:0000269" key="7">
    <source>
    </source>
</evidence>
<evidence type="ECO:0000269" key="8">
    <source>
    </source>
</evidence>
<evidence type="ECO:0000269" key="9">
    <source>
    </source>
</evidence>
<evidence type="ECO:0000269" key="10">
    <source>
    </source>
</evidence>
<evidence type="ECO:0000303" key="11">
    <source>
    </source>
</evidence>
<evidence type="ECO:0000303" key="12">
    <source>
    </source>
</evidence>
<evidence type="ECO:0000305" key="13"/>
<evidence type="ECO:0000305" key="14">
    <source>
    </source>
</evidence>
<evidence type="ECO:0000312" key="15">
    <source>
        <dbReference type="HGNC" id="HGNC:24974"/>
    </source>
</evidence>
<evidence type="ECO:0007744" key="16">
    <source>
    </source>
</evidence>
<evidence type="ECO:0007744" key="17">
    <source>
    </source>
</evidence>
<evidence type="ECO:0007744" key="18">
    <source>
    </source>
</evidence>
<evidence type="ECO:0007829" key="19">
    <source>
        <dbReference type="PDB" id="7NTO"/>
    </source>
</evidence>